<protein>
    <recommendedName>
        <fullName>GDT1-like protein 2, chloroplastic</fullName>
    </recommendedName>
</protein>
<keyword id="KW-0150">Chloroplast</keyword>
<keyword id="KW-0472">Membrane</keyword>
<keyword id="KW-0934">Plastid</keyword>
<keyword id="KW-1185">Reference proteome</keyword>
<keyword id="KW-0809">Transit peptide</keyword>
<keyword id="KW-0812">Transmembrane</keyword>
<keyword id="KW-1133">Transmembrane helix</keyword>
<gene>
    <name type="ordered locus">Os11g0544500</name>
    <name type="ordered locus">LOC_Os11g34180</name>
    <name type="ORF">OsJ_34180</name>
</gene>
<comment type="subcellular location">
    <subcellularLocation>
        <location evidence="3">Plastid</location>
        <location evidence="3">Chloroplast membrane</location>
        <topology evidence="3">Multi-pass membrane protein</topology>
    </subcellularLocation>
</comment>
<comment type="similarity">
    <text evidence="3">Belongs to the GDT1 family.</text>
</comment>
<comment type="sequence caution" evidence="3">
    <conflict type="erroneous gene model prediction">
        <sequence resource="EMBL-CDS" id="EEE52241"/>
    </conflict>
</comment>
<name>GDT12_ORYSJ</name>
<evidence type="ECO:0000255" key="1"/>
<evidence type="ECO:0000256" key="2">
    <source>
        <dbReference type="SAM" id="MobiDB-lite"/>
    </source>
</evidence>
<evidence type="ECO:0000305" key="3"/>
<organism>
    <name type="scientific">Oryza sativa subsp. japonica</name>
    <name type="common">Rice</name>
    <dbReference type="NCBI Taxonomy" id="39947"/>
    <lineage>
        <taxon>Eukaryota</taxon>
        <taxon>Viridiplantae</taxon>
        <taxon>Streptophyta</taxon>
        <taxon>Embryophyta</taxon>
        <taxon>Tracheophyta</taxon>
        <taxon>Spermatophyta</taxon>
        <taxon>Magnoliopsida</taxon>
        <taxon>Liliopsida</taxon>
        <taxon>Poales</taxon>
        <taxon>Poaceae</taxon>
        <taxon>BOP clade</taxon>
        <taxon>Oryzoideae</taxon>
        <taxon>Oryzeae</taxon>
        <taxon>Oryzinae</taxon>
        <taxon>Oryza</taxon>
        <taxon>Oryza sativa</taxon>
    </lineage>
</organism>
<feature type="transit peptide" description="Chloroplast" evidence="1">
    <location>
        <begin position="1"/>
        <end position="12"/>
    </location>
</feature>
<feature type="chain" id="PRO_0000398771" description="GDT1-like protein 2, chloroplastic">
    <location>
        <begin position="13"/>
        <end position="347"/>
    </location>
</feature>
<feature type="transmembrane region" description="Helical" evidence="1">
    <location>
        <begin position="99"/>
        <end position="119"/>
    </location>
</feature>
<feature type="transmembrane region" description="Helical" evidence="1">
    <location>
        <begin position="124"/>
        <end position="144"/>
    </location>
</feature>
<feature type="transmembrane region" description="Helical" evidence="1">
    <location>
        <begin position="165"/>
        <end position="185"/>
    </location>
</feature>
<feature type="transmembrane region" description="Helical" evidence="1">
    <location>
        <begin position="196"/>
        <end position="216"/>
    </location>
</feature>
<feature type="transmembrane region" description="Helical" evidence="1">
    <location>
        <begin position="257"/>
        <end position="277"/>
    </location>
</feature>
<feature type="transmembrane region" description="Helical" evidence="1">
    <location>
        <begin position="299"/>
        <end position="319"/>
    </location>
</feature>
<feature type="transmembrane region" description="Helical" evidence="1">
    <location>
        <begin position="327"/>
        <end position="347"/>
    </location>
</feature>
<feature type="region of interest" description="Disordered" evidence="2">
    <location>
        <begin position="70"/>
        <end position="97"/>
    </location>
</feature>
<reference key="1">
    <citation type="journal article" date="2005" name="BMC Biol.">
        <title>The sequence of rice chromosomes 11 and 12, rich in disease resistance genes and recent gene duplications.</title>
        <authorList>
            <consortium name="The rice chromosomes 11 and 12 sequencing consortia"/>
        </authorList>
    </citation>
    <scope>NUCLEOTIDE SEQUENCE [LARGE SCALE GENOMIC DNA]</scope>
    <source>
        <strain>cv. Nipponbare</strain>
    </source>
</reference>
<reference key="2">
    <citation type="journal article" date="2005" name="Nature">
        <title>The map-based sequence of the rice genome.</title>
        <authorList>
            <consortium name="International rice genome sequencing project (IRGSP)"/>
        </authorList>
    </citation>
    <scope>NUCLEOTIDE SEQUENCE [LARGE SCALE GENOMIC DNA]</scope>
    <source>
        <strain>cv. Nipponbare</strain>
    </source>
</reference>
<reference key="3">
    <citation type="journal article" date="2008" name="Nucleic Acids Res.">
        <title>The rice annotation project database (RAP-DB): 2008 update.</title>
        <authorList>
            <consortium name="The rice annotation project (RAP)"/>
        </authorList>
    </citation>
    <scope>GENOME REANNOTATION</scope>
    <source>
        <strain>cv. Nipponbare</strain>
    </source>
</reference>
<reference key="4">
    <citation type="journal article" date="2013" name="Rice">
        <title>Improvement of the Oryza sativa Nipponbare reference genome using next generation sequence and optical map data.</title>
        <authorList>
            <person name="Kawahara Y."/>
            <person name="de la Bastide M."/>
            <person name="Hamilton J.P."/>
            <person name="Kanamori H."/>
            <person name="McCombie W.R."/>
            <person name="Ouyang S."/>
            <person name="Schwartz D.C."/>
            <person name="Tanaka T."/>
            <person name="Wu J."/>
            <person name="Zhou S."/>
            <person name="Childs K.L."/>
            <person name="Davidson R.M."/>
            <person name="Lin H."/>
            <person name="Quesada-Ocampo L."/>
            <person name="Vaillancourt B."/>
            <person name="Sakai H."/>
            <person name="Lee S.S."/>
            <person name="Kim J."/>
            <person name="Numa H."/>
            <person name="Itoh T."/>
            <person name="Buell C.R."/>
            <person name="Matsumoto T."/>
        </authorList>
    </citation>
    <scope>GENOME REANNOTATION</scope>
    <source>
        <strain>cv. Nipponbare</strain>
    </source>
</reference>
<reference key="5">
    <citation type="journal article" date="2005" name="PLoS Biol.">
        <title>The genomes of Oryza sativa: a history of duplications.</title>
        <authorList>
            <person name="Yu J."/>
            <person name="Wang J."/>
            <person name="Lin W."/>
            <person name="Li S."/>
            <person name="Li H."/>
            <person name="Zhou J."/>
            <person name="Ni P."/>
            <person name="Dong W."/>
            <person name="Hu S."/>
            <person name="Zeng C."/>
            <person name="Zhang J."/>
            <person name="Zhang Y."/>
            <person name="Li R."/>
            <person name="Xu Z."/>
            <person name="Li S."/>
            <person name="Li X."/>
            <person name="Zheng H."/>
            <person name="Cong L."/>
            <person name="Lin L."/>
            <person name="Yin J."/>
            <person name="Geng J."/>
            <person name="Li G."/>
            <person name="Shi J."/>
            <person name="Liu J."/>
            <person name="Lv H."/>
            <person name="Li J."/>
            <person name="Wang J."/>
            <person name="Deng Y."/>
            <person name="Ran L."/>
            <person name="Shi X."/>
            <person name="Wang X."/>
            <person name="Wu Q."/>
            <person name="Li C."/>
            <person name="Ren X."/>
            <person name="Wang J."/>
            <person name="Wang X."/>
            <person name="Li D."/>
            <person name="Liu D."/>
            <person name="Zhang X."/>
            <person name="Ji Z."/>
            <person name="Zhao W."/>
            <person name="Sun Y."/>
            <person name="Zhang Z."/>
            <person name="Bao J."/>
            <person name="Han Y."/>
            <person name="Dong L."/>
            <person name="Ji J."/>
            <person name="Chen P."/>
            <person name="Wu S."/>
            <person name="Liu J."/>
            <person name="Xiao Y."/>
            <person name="Bu D."/>
            <person name="Tan J."/>
            <person name="Yang L."/>
            <person name="Ye C."/>
            <person name="Zhang J."/>
            <person name="Xu J."/>
            <person name="Zhou Y."/>
            <person name="Yu Y."/>
            <person name="Zhang B."/>
            <person name="Zhuang S."/>
            <person name="Wei H."/>
            <person name="Liu B."/>
            <person name="Lei M."/>
            <person name="Yu H."/>
            <person name="Li Y."/>
            <person name="Xu H."/>
            <person name="Wei S."/>
            <person name="He X."/>
            <person name="Fang L."/>
            <person name="Zhang Z."/>
            <person name="Zhang Y."/>
            <person name="Huang X."/>
            <person name="Su Z."/>
            <person name="Tong W."/>
            <person name="Li J."/>
            <person name="Tong Z."/>
            <person name="Li S."/>
            <person name="Ye J."/>
            <person name="Wang L."/>
            <person name="Fang L."/>
            <person name="Lei T."/>
            <person name="Chen C.-S."/>
            <person name="Chen H.-C."/>
            <person name="Xu Z."/>
            <person name="Li H."/>
            <person name="Huang H."/>
            <person name="Zhang F."/>
            <person name="Xu H."/>
            <person name="Li N."/>
            <person name="Zhao C."/>
            <person name="Li S."/>
            <person name="Dong L."/>
            <person name="Huang Y."/>
            <person name="Li L."/>
            <person name="Xi Y."/>
            <person name="Qi Q."/>
            <person name="Li W."/>
            <person name="Zhang B."/>
            <person name="Hu W."/>
            <person name="Zhang Y."/>
            <person name="Tian X."/>
            <person name="Jiao Y."/>
            <person name="Liang X."/>
            <person name="Jin J."/>
            <person name="Gao L."/>
            <person name="Zheng W."/>
            <person name="Hao B."/>
            <person name="Liu S.-M."/>
            <person name="Wang W."/>
            <person name="Yuan L."/>
            <person name="Cao M."/>
            <person name="McDermott J."/>
            <person name="Samudrala R."/>
            <person name="Wang J."/>
            <person name="Wong G.K.-S."/>
            <person name="Yang H."/>
        </authorList>
    </citation>
    <scope>NUCLEOTIDE SEQUENCE [LARGE SCALE GENOMIC DNA]</scope>
    <source>
        <strain>cv. Nipponbare</strain>
    </source>
</reference>
<reference key="6">
    <citation type="journal article" date="2003" name="Science">
        <title>Collection, mapping, and annotation of over 28,000 cDNA clones from japonica rice.</title>
        <authorList>
            <consortium name="The rice full-length cDNA consortium"/>
        </authorList>
    </citation>
    <scope>NUCLEOTIDE SEQUENCE [LARGE SCALE MRNA]</scope>
    <source>
        <strain>cv. Nipponbare</strain>
    </source>
</reference>
<dbReference type="EMBL" id="DP000010">
    <property type="protein sequence ID" value="ABA94197.1"/>
    <property type="molecule type" value="Genomic_DNA"/>
</dbReference>
<dbReference type="EMBL" id="AP008217">
    <property type="protein sequence ID" value="BAF28416.1"/>
    <property type="molecule type" value="Genomic_DNA"/>
</dbReference>
<dbReference type="EMBL" id="AP014967">
    <property type="protein sequence ID" value="BAT14359.1"/>
    <property type="molecule type" value="Genomic_DNA"/>
</dbReference>
<dbReference type="EMBL" id="CM000148">
    <property type="protein sequence ID" value="EEE52241.1"/>
    <property type="status" value="ALT_SEQ"/>
    <property type="molecule type" value="Genomic_DNA"/>
</dbReference>
<dbReference type="EMBL" id="AK071982">
    <property type="protein sequence ID" value="BAG92776.1"/>
    <property type="molecule type" value="mRNA"/>
</dbReference>
<dbReference type="EMBL" id="AK099080">
    <property type="protein sequence ID" value="BAG93912.1"/>
    <property type="molecule type" value="mRNA"/>
</dbReference>
<dbReference type="RefSeq" id="XP_015615427.1">
    <property type="nucleotide sequence ID" value="XM_015759941.1"/>
</dbReference>
<dbReference type="FunCoup" id="Q2R2Z4">
    <property type="interactions" value="277"/>
</dbReference>
<dbReference type="STRING" id="39947.Q2R2Z4"/>
<dbReference type="PaxDb" id="39947-Q2R2Z4"/>
<dbReference type="EnsemblPlants" id="Os11t0544500-01">
    <property type="protein sequence ID" value="Os11t0544500-01"/>
    <property type="gene ID" value="Os11g0544500"/>
</dbReference>
<dbReference type="EnsemblPlants" id="Os11t0544500-02">
    <property type="protein sequence ID" value="Os11t0544500-02"/>
    <property type="gene ID" value="Os11g0544500"/>
</dbReference>
<dbReference type="Gramene" id="Os11t0544500-01">
    <property type="protein sequence ID" value="Os11t0544500-01"/>
    <property type="gene ID" value="Os11g0544500"/>
</dbReference>
<dbReference type="Gramene" id="Os11t0544500-02">
    <property type="protein sequence ID" value="Os11t0544500-02"/>
    <property type="gene ID" value="Os11g0544500"/>
</dbReference>
<dbReference type="KEGG" id="dosa:Os11g0544500"/>
<dbReference type="eggNOG" id="KOG2881">
    <property type="taxonomic scope" value="Eukaryota"/>
</dbReference>
<dbReference type="HOGENOM" id="CLU_040186_1_0_1"/>
<dbReference type="InParanoid" id="Q2R2Z4"/>
<dbReference type="OMA" id="LAMQFEK"/>
<dbReference type="OrthoDB" id="442680at2759"/>
<dbReference type="Proteomes" id="UP000000763">
    <property type="component" value="Chromosome 11"/>
</dbReference>
<dbReference type="Proteomes" id="UP000007752">
    <property type="component" value="Chromosome 11"/>
</dbReference>
<dbReference type="Proteomes" id="UP000059680">
    <property type="component" value="Chromosome 11"/>
</dbReference>
<dbReference type="GO" id="GO:0009507">
    <property type="term" value="C:chloroplast"/>
    <property type="evidence" value="ECO:0000318"/>
    <property type="project" value="GO_Central"/>
</dbReference>
<dbReference type="GO" id="GO:0031969">
    <property type="term" value="C:chloroplast membrane"/>
    <property type="evidence" value="ECO:0007669"/>
    <property type="project" value="UniProtKB-SubCell"/>
</dbReference>
<dbReference type="GO" id="GO:0005794">
    <property type="term" value="C:Golgi apparatus"/>
    <property type="evidence" value="ECO:0000318"/>
    <property type="project" value="GO_Central"/>
</dbReference>
<dbReference type="GO" id="GO:0015085">
    <property type="term" value="F:calcium ion transmembrane transporter activity"/>
    <property type="evidence" value="ECO:0000318"/>
    <property type="project" value="GO_Central"/>
</dbReference>
<dbReference type="GO" id="GO:0005384">
    <property type="term" value="F:manganese ion transmembrane transporter activity"/>
    <property type="evidence" value="ECO:0000318"/>
    <property type="project" value="GO_Central"/>
</dbReference>
<dbReference type="GO" id="GO:0070588">
    <property type="term" value="P:calcium ion transmembrane transport"/>
    <property type="evidence" value="ECO:0000318"/>
    <property type="project" value="GO_Central"/>
</dbReference>
<dbReference type="GO" id="GO:0019722">
    <property type="term" value="P:calcium-mediated signaling"/>
    <property type="evidence" value="ECO:0007669"/>
    <property type="project" value="EnsemblPlants"/>
</dbReference>
<dbReference type="GO" id="GO:0032468">
    <property type="term" value="P:Golgi calcium ion homeostasis"/>
    <property type="evidence" value="ECO:0000318"/>
    <property type="project" value="GO_Central"/>
</dbReference>
<dbReference type="GO" id="GO:0032472">
    <property type="term" value="P:Golgi calcium ion transport"/>
    <property type="evidence" value="ECO:0000318"/>
    <property type="project" value="GO_Central"/>
</dbReference>
<dbReference type="GO" id="GO:0071421">
    <property type="term" value="P:manganese ion transmembrane transport"/>
    <property type="evidence" value="ECO:0000318"/>
    <property type="project" value="GO_Central"/>
</dbReference>
<dbReference type="InterPro" id="IPR001727">
    <property type="entry name" value="GDT1-like"/>
</dbReference>
<dbReference type="InterPro" id="IPR049555">
    <property type="entry name" value="GDT1-like_CS"/>
</dbReference>
<dbReference type="PANTHER" id="PTHR12608:SF7">
    <property type="entry name" value="PROTEIN PAM71-HOMOLOG, CHLOROPLASTIC"/>
    <property type="match status" value="1"/>
</dbReference>
<dbReference type="PANTHER" id="PTHR12608">
    <property type="entry name" value="TRANSMEMBRANE PROTEIN HTP-1 RELATED"/>
    <property type="match status" value="1"/>
</dbReference>
<dbReference type="Pfam" id="PF01169">
    <property type="entry name" value="GDT1"/>
    <property type="match status" value="2"/>
</dbReference>
<dbReference type="PROSITE" id="PS01214">
    <property type="entry name" value="UPF0016"/>
    <property type="match status" value="1"/>
</dbReference>
<proteinExistence type="evidence at transcript level"/>
<sequence>MATAISVGVAVPAASRRREDGAGPPLLLRRRCLVEGQVRCRLPWLRPIRHNVRVQTSNVNVGAGSYEGGEAGSHGEHLDSSATRDSNKPTKPPSGSRYPQSIAAVLLLCALASAFIVFFKGQPSAVVAMLAKSGFTAAFTLIFVSEIGDKTFFIAALLAMQYQRALVLLGSMAALSLMTIVSVIIGRIFQSVPAQFQTTLPIGEYAAIALLAFFGFKSIKDAWQLPDNANGNLQGNSESGELAEAEELVKEKVAKKLTSPLEVLWKSFSLVFFAEWGDRSMLATIALGAAQSPFGVASGAIAGHLVATFLAIVGGAFLANYLSEKLVGLIGGVLFLLFAVATFFGVF</sequence>
<accession>Q2R2Z4</accession>
<accession>A0A0P0Y3A8</accession>
<accession>B9GB35</accession>